<keyword id="KW-0963">Cytoplasm</keyword>
<keyword id="KW-0342">GTP-binding</keyword>
<keyword id="KW-0436">Ligase</keyword>
<keyword id="KW-0460">Magnesium</keyword>
<keyword id="KW-0479">Metal-binding</keyword>
<keyword id="KW-0547">Nucleotide-binding</keyword>
<keyword id="KW-0658">Purine biosynthesis</keyword>
<evidence type="ECO:0000250" key="1"/>
<evidence type="ECO:0000255" key="2">
    <source>
        <dbReference type="HAMAP-Rule" id="MF_00011"/>
    </source>
</evidence>
<gene>
    <name evidence="2" type="primary">purA</name>
    <name type="ordered locus">NTHI1407</name>
</gene>
<dbReference type="EC" id="6.3.4.4" evidence="2"/>
<dbReference type="EMBL" id="CP000057">
    <property type="protein sequence ID" value="AAX88229.1"/>
    <property type="molecule type" value="Genomic_DNA"/>
</dbReference>
<dbReference type="RefSeq" id="WP_005660513.1">
    <property type="nucleotide sequence ID" value="NC_007146.2"/>
</dbReference>
<dbReference type="SMR" id="Q4QL68"/>
<dbReference type="GeneID" id="93220235"/>
<dbReference type="KEGG" id="hit:NTHI1407"/>
<dbReference type="HOGENOM" id="CLU_029848_0_0_6"/>
<dbReference type="UniPathway" id="UPA00075">
    <property type="reaction ID" value="UER00335"/>
</dbReference>
<dbReference type="Proteomes" id="UP000002525">
    <property type="component" value="Chromosome"/>
</dbReference>
<dbReference type="GO" id="GO:0005737">
    <property type="term" value="C:cytoplasm"/>
    <property type="evidence" value="ECO:0007669"/>
    <property type="project" value="UniProtKB-SubCell"/>
</dbReference>
<dbReference type="GO" id="GO:0004019">
    <property type="term" value="F:adenylosuccinate synthase activity"/>
    <property type="evidence" value="ECO:0007669"/>
    <property type="project" value="UniProtKB-UniRule"/>
</dbReference>
<dbReference type="GO" id="GO:0005525">
    <property type="term" value="F:GTP binding"/>
    <property type="evidence" value="ECO:0007669"/>
    <property type="project" value="UniProtKB-UniRule"/>
</dbReference>
<dbReference type="GO" id="GO:0000287">
    <property type="term" value="F:magnesium ion binding"/>
    <property type="evidence" value="ECO:0007669"/>
    <property type="project" value="UniProtKB-UniRule"/>
</dbReference>
<dbReference type="GO" id="GO:0044208">
    <property type="term" value="P:'de novo' AMP biosynthetic process"/>
    <property type="evidence" value="ECO:0007669"/>
    <property type="project" value="UniProtKB-UniRule"/>
</dbReference>
<dbReference type="GO" id="GO:0046040">
    <property type="term" value="P:IMP metabolic process"/>
    <property type="evidence" value="ECO:0007669"/>
    <property type="project" value="TreeGrafter"/>
</dbReference>
<dbReference type="CDD" id="cd03108">
    <property type="entry name" value="AdSS"/>
    <property type="match status" value="1"/>
</dbReference>
<dbReference type="FunFam" id="1.10.300.10:FF:000001">
    <property type="entry name" value="Adenylosuccinate synthetase"/>
    <property type="match status" value="1"/>
</dbReference>
<dbReference type="FunFam" id="3.90.170.10:FF:000001">
    <property type="entry name" value="Adenylosuccinate synthetase"/>
    <property type="match status" value="1"/>
</dbReference>
<dbReference type="Gene3D" id="3.40.440.10">
    <property type="entry name" value="Adenylosuccinate Synthetase, subunit A, domain 1"/>
    <property type="match status" value="1"/>
</dbReference>
<dbReference type="Gene3D" id="1.10.300.10">
    <property type="entry name" value="Adenylosuccinate Synthetase, subunit A, domain 2"/>
    <property type="match status" value="1"/>
</dbReference>
<dbReference type="Gene3D" id="3.90.170.10">
    <property type="entry name" value="Adenylosuccinate Synthetase, subunit A, domain 3"/>
    <property type="match status" value="1"/>
</dbReference>
<dbReference type="HAMAP" id="MF_00011">
    <property type="entry name" value="Adenylosucc_synth"/>
    <property type="match status" value="1"/>
</dbReference>
<dbReference type="InterPro" id="IPR018220">
    <property type="entry name" value="Adenylosuccin_syn_GTP-bd"/>
</dbReference>
<dbReference type="InterPro" id="IPR033128">
    <property type="entry name" value="Adenylosuccin_syn_Lys_AS"/>
</dbReference>
<dbReference type="InterPro" id="IPR042109">
    <property type="entry name" value="Adenylosuccinate_synth_dom1"/>
</dbReference>
<dbReference type="InterPro" id="IPR042110">
    <property type="entry name" value="Adenylosuccinate_synth_dom2"/>
</dbReference>
<dbReference type="InterPro" id="IPR042111">
    <property type="entry name" value="Adenylosuccinate_synth_dom3"/>
</dbReference>
<dbReference type="InterPro" id="IPR001114">
    <property type="entry name" value="Adenylosuccinate_synthetase"/>
</dbReference>
<dbReference type="InterPro" id="IPR027417">
    <property type="entry name" value="P-loop_NTPase"/>
</dbReference>
<dbReference type="NCBIfam" id="NF002223">
    <property type="entry name" value="PRK01117.1"/>
    <property type="match status" value="1"/>
</dbReference>
<dbReference type="NCBIfam" id="TIGR00184">
    <property type="entry name" value="purA"/>
    <property type="match status" value="1"/>
</dbReference>
<dbReference type="PANTHER" id="PTHR11846">
    <property type="entry name" value="ADENYLOSUCCINATE SYNTHETASE"/>
    <property type="match status" value="1"/>
</dbReference>
<dbReference type="PANTHER" id="PTHR11846:SF0">
    <property type="entry name" value="ADENYLOSUCCINATE SYNTHETASE"/>
    <property type="match status" value="1"/>
</dbReference>
<dbReference type="Pfam" id="PF00709">
    <property type="entry name" value="Adenylsucc_synt"/>
    <property type="match status" value="1"/>
</dbReference>
<dbReference type="SMART" id="SM00788">
    <property type="entry name" value="Adenylsucc_synt"/>
    <property type="match status" value="1"/>
</dbReference>
<dbReference type="SUPFAM" id="SSF52540">
    <property type="entry name" value="P-loop containing nucleoside triphosphate hydrolases"/>
    <property type="match status" value="1"/>
</dbReference>
<dbReference type="PROSITE" id="PS01266">
    <property type="entry name" value="ADENYLOSUCCIN_SYN_1"/>
    <property type="match status" value="1"/>
</dbReference>
<dbReference type="PROSITE" id="PS00513">
    <property type="entry name" value="ADENYLOSUCCIN_SYN_2"/>
    <property type="match status" value="1"/>
</dbReference>
<comment type="function">
    <text evidence="2">Plays an important role in the de novo pathway of purine nucleotide biosynthesis. Catalyzes the first committed step in the biosynthesis of AMP from IMP.</text>
</comment>
<comment type="catalytic activity">
    <reaction evidence="2">
        <text>IMP + L-aspartate + GTP = N(6)-(1,2-dicarboxyethyl)-AMP + GDP + phosphate + 2 H(+)</text>
        <dbReference type="Rhea" id="RHEA:15753"/>
        <dbReference type="ChEBI" id="CHEBI:15378"/>
        <dbReference type="ChEBI" id="CHEBI:29991"/>
        <dbReference type="ChEBI" id="CHEBI:37565"/>
        <dbReference type="ChEBI" id="CHEBI:43474"/>
        <dbReference type="ChEBI" id="CHEBI:57567"/>
        <dbReference type="ChEBI" id="CHEBI:58053"/>
        <dbReference type="ChEBI" id="CHEBI:58189"/>
        <dbReference type="EC" id="6.3.4.4"/>
    </reaction>
</comment>
<comment type="cofactor">
    <cofactor evidence="2">
        <name>Mg(2+)</name>
        <dbReference type="ChEBI" id="CHEBI:18420"/>
    </cofactor>
    <text evidence="2">Binds 1 Mg(2+) ion per subunit.</text>
</comment>
<comment type="pathway">
    <text evidence="2">Purine metabolism; AMP biosynthesis via de novo pathway; AMP from IMP: step 1/2.</text>
</comment>
<comment type="subunit">
    <text evidence="2">Homodimer.</text>
</comment>
<comment type="subcellular location">
    <subcellularLocation>
        <location evidence="2">Cytoplasm</location>
    </subcellularLocation>
</comment>
<comment type="similarity">
    <text evidence="2">Belongs to the adenylosuccinate synthetase family.</text>
</comment>
<name>PURA_HAEI8</name>
<organism>
    <name type="scientific">Haemophilus influenzae (strain 86-028NP)</name>
    <dbReference type="NCBI Taxonomy" id="281310"/>
    <lineage>
        <taxon>Bacteria</taxon>
        <taxon>Pseudomonadati</taxon>
        <taxon>Pseudomonadota</taxon>
        <taxon>Gammaproteobacteria</taxon>
        <taxon>Pasteurellales</taxon>
        <taxon>Pasteurellaceae</taxon>
        <taxon>Haemophilus</taxon>
    </lineage>
</organism>
<feature type="initiator methionine" description="Removed" evidence="1">
    <location>
        <position position="1"/>
    </location>
</feature>
<feature type="chain" id="PRO_0000095184" description="Adenylosuccinate synthetase">
    <location>
        <begin position="2"/>
        <end position="432"/>
    </location>
</feature>
<feature type="active site" description="Proton acceptor" evidence="2">
    <location>
        <position position="14"/>
    </location>
</feature>
<feature type="active site" description="Proton donor" evidence="2">
    <location>
        <position position="42"/>
    </location>
</feature>
<feature type="binding site" evidence="2">
    <location>
        <begin position="13"/>
        <end position="19"/>
    </location>
    <ligand>
        <name>GTP</name>
        <dbReference type="ChEBI" id="CHEBI:37565"/>
    </ligand>
</feature>
<feature type="binding site" description="in other chain" evidence="2">
    <location>
        <begin position="14"/>
        <end position="17"/>
    </location>
    <ligand>
        <name>IMP</name>
        <dbReference type="ChEBI" id="CHEBI:58053"/>
        <note>ligand shared between dimeric partners</note>
    </ligand>
</feature>
<feature type="binding site" evidence="2">
    <location>
        <position position="14"/>
    </location>
    <ligand>
        <name>Mg(2+)</name>
        <dbReference type="ChEBI" id="CHEBI:18420"/>
    </ligand>
</feature>
<feature type="binding site" description="in other chain" evidence="2">
    <location>
        <begin position="39"/>
        <end position="42"/>
    </location>
    <ligand>
        <name>IMP</name>
        <dbReference type="ChEBI" id="CHEBI:58053"/>
        <note>ligand shared between dimeric partners</note>
    </ligand>
</feature>
<feature type="binding site" evidence="2">
    <location>
        <begin position="41"/>
        <end position="43"/>
    </location>
    <ligand>
        <name>GTP</name>
        <dbReference type="ChEBI" id="CHEBI:37565"/>
    </ligand>
</feature>
<feature type="binding site" evidence="2">
    <location>
        <position position="41"/>
    </location>
    <ligand>
        <name>Mg(2+)</name>
        <dbReference type="ChEBI" id="CHEBI:18420"/>
    </ligand>
</feature>
<feature type="binding site" description="in other chain" evidence="2">
    <location>
        <position position="130"/>
    </location>
    <ligand>
        <name>IMP</name>
        <dbReference type="ChEBI" id="CHEBI:58053"/>
        <note>ligand shared between dimeric partners</note>
    </ligand>
</feature>
<feature type="binding site" evidence="2">
    <location>
        <position position="144"/>
    </location>
    <ligand>
        <name>IMP</name>
        <dbReference type="ChEBI" id="CHEBI:58053"/>
        <note>ligand shared between dimeric partners</note>
    </ligand>
</feature>
<feature type="binding site" description="in other chain" evidence="2">
    <location>
        <position position="225"/>
    </location>
    <ligand>
        <name>IMP</name>
        <dbReference type="ChEBI" id="CHEBI:58053"/>
        <note>ligand shared between dimeric partners</note>
    </ligand>
</feature>
<feature type="binding site" description="in other chain" evidence="2">
    <location>
        <position position="240"/>
    </location>
    <ligand>
        <name>IMP</name>
        <dbReference type="ChEBI" id="CHEBI:58053"/>
        <note>ligand shared between dimeric partners</note>
    </ligand>
</feature>
<feature type="binding site" evidence="2">
    <location>
        <begin position="300"/>
        <end position="306"/>
    </location>
    <ligand>
        <name>substrate</name>
    </ligand>
</feature>
<feature type="binding site" description="in other chain" evidence="2">
    <location>
        <position position="304"/>
    </location>
    <ligand>
        <name>IMP</name>
        <dbReference type="ChEBI" id="CHEBI:58053"/>
        <note>ligand shared between dimeric partners</note>
    </ligand>
</feature>
<feature type="binding site" evidence="2">
    <location>
        <position position="306"/>
    </location>
    <ligand>
        <name>GTP</name>
        <dbReference type="ChEBI" id="CHEBI:37565"/>
    </ligand>
</feature>
<feature type="binding site" evidence="2">
    <location>
        <begin position="332"/>
        <end position="334"/>
    </location>
    <ligand>
        <name>GTP</name>
        <dbReference type="ChEBI" id="CHEBI:37565"/>
    </ligand>
</feature>
<feature type="binding site" evidence="2">
    <location>
        <begin position="415"/>
        <end position="417"/>
    </location>
    <ligand>
        <name>GTP</name>
        <dbReference type="ChEBI" id="CHEBI:37565"/>
    </ligand>
</feature>
<sequence>MGKSVVILGAQWGDEGKGKIVDLLTDRVKYVVRYQGGHNAGHTLIINGEKTVLRLIPSGMLHPNVTCLIGNGVVVSPEALMKEMGELESRGIKVRERLLISEACPLILPYHVAMDHAREAALGKKAIGTTGRGIGPAYEDKVARRGLRVGDLFNKEAFAEKLKNILEYYNFQLVNYYKVEPVDYQKTLDDVMAIADVITGMVADITTILDTARKNGEHILFEGAQGTMLDIDHGTYPYVTSSNTTAGGVATGSGFGPRNLDYVLGIIKAYCTRVGGGPFTTELFDDVGAEIARKGNEFGAVTGRPRRCGWFDAVAIRRAIQLNSISGFCMTKLDVLDGFDEVKICVAYKMPNGEIVEYAPLAAKDWEGVEPIYETLPGWKENTFRITDVNKLPQNCINYIKRIEEVTGVPIDILSTGPDRVETMILRDPFAA</sequence>
<proteinExistence type="inferred from homology"/>
<protein>
    <recommendedName>
        <fullName evidence="2">Adenylosuccinate synthetase</fullName>
        <shortName evidence="2">AMPSase</shortName>
        <shortName evidence="2">AdSS</shortName>
        <ecNumber evidence="2">6.3.4.4</ecNumber>
    </recommendedName>
    <alternativeName>
        <fullName evidence="2">IMP--aspartate ligase</fullName>
    </alternativeName>
</protein>
<reference key="1">
    <citation type="journal article" date="2005" name="J. Bacteriol.">
        <title>Genomic sequence of an otitis media isolate of nontypeable Haemophilus influenzae: comparative study with H. influenzae serotype d, strain KW20.</title>
        <authorList>
            <person name="Harrison A."/>
            <person name="Dyer D.W."/>
            <person name="Gillaspy A."/>
            <person name="Ray W.C."/>
            <person name="Mungur R."/>
            <person name="Carson M.B."/>
            <person name="Zhong H."/>
            <person name="Gipson J."/>
            <person name="Gipson M."/>
            <person name="Johnson L.S."/>
            <person name="Lewis L."/>
            <person name="Bakaletz L.O."/>
            <person name="Munson R.S. Jr."/>
        </authorList>
    </citation>
    <scope>NUCLEOTIDE SEQUENCE [LARGE SCALE GENOMIC DNA]</scope>
    <source>
        <strain>86-028NP</strain>
    </source>
</reference>
<accession>Q4QL68</accession>